<keyword id="KW-0067">ATP-binding</keyword>
<keyword id="KW-0963">Cytoplasm</keyword>
<keyword id="KW-0227">DNA damage</keyword>
<keyword id="KW-0228">DNA excision</keyword>
<keyword id="KW-0234">DNA repair</keyword>
<keyword id="KW-0267">Excision nuclease</keyword>
<keyword id="KW-0347">Helicase</keyword>
<keyword id="KW-0378">Hydrolase</keyword>
<keyword id="KW-0547">Nucleotide-binding</keyword>
<keyword id="KW-0742">SOS response</keyword>
<reference key="1">
    <citation type="submission" date="2006-09" db="EMBL/GenBank/DDBJ databases">
        <authorList>
            <consortium name="The Klebsiella pneumonia Genome Sequencing Project"/>
            <person name="McClelland M."/>
            <person name="Sanderson E.K."/>
            <person name="Spieth J."/>
            <person name="Clifton W.S."/>
            <person name="Latreille P."/>
            <person name="Sabo A."/>
            <person name="Pepin K."/>
            <person name="Bhonagiri V."/>
            <person name="Porwollik S."/>
            <person name="Ali J."/>
            <person name="Wilson R.K."/>
        </authorList>
    </citation>
    <scope>NUCLEOTIDE SEQUENCE [LARGE SCALE GENOMIC DNA]</scope>
    <source>
        <strain>ATCC 700721 / MGH 78578</strain>
    </source>
</reference>
<comment type="function">
    <text evidence="1">The UvrABC repair system catalyzes the recognition and processing of DNA lesions. A damage recognition complex composed of 2 UvrA and 2 UvrB subunits scans DNA for abnormalities. Upon binding of the UvrA(2)B(2) complex to a putative damaged site, the DNA wraps around one UvrB monomer. DNA wrap is dependent on ATP binding by UvrB and probably causes local melting of the DNA helix, facilitating insertion of UvrB beta-hairpin between the DNA strands. Then UvrB probes one DNA strand for the presence of a lesion. If a lesion is found the UvrA subunits dissociate and the UvrB-DNA preincision complex is formed. This complex is subsequently bound by UvrC and the second UvrB is released. If no lesion is found, the DNA wraps around the other UvrB subunit that will check the other stand for damage.</text>
</comment>
<comment type="subunit">
    <text evidence="1">Forms a heterotetramer with UvrA during the search for lesions. Interacts with UvrC in an incision complex.</text>
</comment>
<comment type="subcellular location">
    <subcellularLocation>
        <location evidence="1">Cytoplasm</location>
    </subcellularLocation>
</comment>
<comment type="domain">
    <text evidence="1">The beta-hairpin motif is involved in DNA binding.</text>
</comment>
<comment type="similarity">
    <text evidence="1">Belongs to the UvrB family.</text>
</comment>
<sequence>MSKSFVLHSAFRPSGDQPEAIRRLEEGLEDGLAHQTLLGVTGSGKTFTIANVIADLQRPTMVLAPNKTLAAQLYGEMKEFFPENAVEYFVSYYDYYQPEAYVPSSDTFIEKDASVNEHIEQMRLSATKALLERRDVVVVASVSAIYGLGDPDLYLKMMLHLTVGMLIDQRAILRRLAELQYTRNDQAFQRGTFRVRGEVIDVFPAESDDIALRIELFDEEVERLSLFDPLTGHVEGTVPRYTIYPKTHYVTPRERIVQAMEEIKLELAERRKVLLANNKLLEEQRLTQRTQFDLEMMNELGYCSGIENYSRFLSGRGPGEPPPTLFDYLPADGLLVIDESHVTVPQIGGMYRGDRARKETLVEYGFRLPSALDNRPMKFEEFEALAPQTIYVSATPGAYELDKSGGEVVDQVVRPTGLLDPIIEVRPVATQVDDLLSEIRLRTAINERVLVTTLTKRMAEDLTEYLEEHGERVRYLHSDIDTVERMEIIRDLRLGEFDVLVGINLLREGLDMPEVSLVAILDADKEGFLRSERSLIQTIGRAARNVNGKAILYGDKITPSMAKAIGETERRREKQQRYNEEHGIVPQGLNKKVVDILQLGQGLAKTKAKGRGKAKAVEPAGLSAVDMTPKALQQKIHELEGQMMQHAQNLEFEEAAQIRDQLHQLRELFIAAS</sequence>
<name>UVRB_KLEP7</name>
<protein>
    <recommendedName>
        <fullName evidence="1">UvrABC system protein B</fullName>
        <shortName evidence="1">Protein UvrB</shortName>
    </recommendedName>
    <alternativeName>
        <fullName evidence="1">Excinuclease ABC subunit B</fullName>
    </alternativeName>
</protein>
<organism>
    <name type="scientific">Klebsiella pneumoniae subsp. pneumoniae (strain ATCC 700721 / MGH 78578)</name>
    <dbReference type="NCBI Taxonomy" id="272620"/>
    <lineage>
        <taxon>Bacteria</taxon>
        <taxon>Pseudomonadati</taxon>
        <taxon>Pseudomonadota</taxon>
        <taxon>Gammaproteobacteria</taxon>
        <taxon>Enterobacterales</taxon>
        <taxon>Enterobacteriaceae</taxon>
        <taxon>Klebsiella/Raoultella group</taxon>
        <taxon>Klebsiella</taxon>
        <taxon>Klebsiella pneumoniae complex</taxon>
    </lineage>
</organism>
<gene>
    <name evidence="1" type="primary">uvrB</name>
    <name type="ordered locus">KPN78578_07790</name>
    <name type="ORF">KPN_00804</name>
</gene>
<accession>A6T6L9</accession>
<feature type="chain" id="PRO_1000077895" description="UvrABC system protein B">
    <location>
        <begin position="1"/>
        <end position="673"/>
    </location>
</feature>
<feature type="domain" description="Helicase ATP-binding" evidence="1">
    <location>
        <begin position="26"/>
        <end position="183"/>
    </location>
</feature>
<feature type="domain" description="Helicase C-terminal" evidence="1">
    <location>
        <begin position="431"/>
        <end position="597"/>
    </location>
</feature>
<feature type="domain" description="UVR" evidence="1">
    <location>
        <begin position="633"/>
        <end position="668"/>
    </location>
</feature>
<feature type="short sequence motif" description="Beta-hairpin">
    <location>
        <begin position="92"/>
        <end position="115"/>
    </location>
</feature>
<feature type="binding site" evidence="1">
    <location>
        <begin position="39"/>
        <end position="46"/>
    </location>
    <ligand>
        <name>ATP</name>
        <dbReference type="ChEBI" id="CHEBI:30616"/>
    </ligand>
</feature>
<proteinExistence type="inferred from homology"/>
<dbReference type="EMBL" id="CP000647">
    <property type="protein sequence ID" value="ABR76240.1"/>
    <property type="molecule type" value="Genomic_DNA"/>
</dbReference>
<dbReference type="RefSeq" id="WP_002895655.1">
    <property type="nucleotide sequence ID" value="NC_009648.1"/>
</dbReference>
<dbReference type="SMR" id="A6T6L9"/>
<dbReference type="STRING" id="272620.KPN_00804"/>
<dbReference type="PaxDb" id="272620-KPN_00804"/>
<dbReference type="EnsemblBacteria" id="ABR76240">
    <property type="protein sequence ID" value="ABR76240"/>
    <property type="gene ID" value="KPN_00804"/>
</dbReference>
<dbReference type="KEGG" id="kpn:KPN_00804"/>
<dbReference type="HOGENOM" id="CLU_009621_2_1_6"/>
<dbReference type="Proteomes" id="UP000000265">
    <property type="component" value="Chromosome"/>
</dbReference>
<dbReference type="GO" id="GO:0005737">
    <property type="term" value="C:cytoplasm"/>
    <property type="evidence" value="ECO:0007669"/>
    <property type="project" value="UniProtKB-SubCell"/>
</dbReference>
<dbReference type="GO" id="GO:0009380">
    <property type="term" value="C:excinuclease repair complex"/>
    <property type="evidence" value="ECO:0007669"/>
    <property type="project" value="InterPro"/>
</dbReference>
<dbReference type="GO" id="GO:0005524">
    <property type="term" value="F:ATP binding"/>
    <property type="evidence" value="ECO:0007669"/>
    <property type="project" value="UniProtKB-UniRule"/>
</dbReference>
<dbReference type="GO" id="GO:0016887">
    <property type="term" value="F:ATP hydrolysis activity"/>
    <property type="evidence" value="ECO:0007669"/>
    <property type="project" value="InterPro"/>
</dbReference>
<dbReference type="GO" id="GO:0003677">
    <property type="term" value="F:DNA binding"/>
    <property type="evidence" value="ECO:0007669"/>
    <property type="project" value="UniProtKB-UniRule"/>
</dbReference>
<dbReference type="GO" id="GO:0009381">
    <property type="term" value="F:excinuclease ABC activity"/>
    <property type="evidence" value="ECO:0007669"/>
    <property type="project" value="UniProtKB-UniRule"/>
</dbReference>
<dbReference type="GO" id="GO:0004386">
    <property type="term" value="F:helicase activity"/>
    <property type="evidence" value="ECO:0007669"/>
    <property type="project" value="UniProtKB-KW"/>
</dbReference>
<dbReference type="GO" id="GO:0006289">
    <property type="term" value="P:nucleotide-excision repair"/>
    <property type="evidence" value="ECO:0007669"/>
    <property type="project" value="UniProtKB-UniRule"/>
</dbReference>
<dbReference type="GO" id="GO:0009432">
    <property type="term" value="P:SOS response"/>
    <property type="evidence" value="ECO:0007669"/>
    <property type="project" value="UniProtKB-UniRule"/>
</dbReference>
<dbReference type="CDD" id="cd17916">
    <property type="entry name" value="DEXHc_UvrB"/>
    <property type="match status" value="1"/>
</dbReference>
<dbReference type="CDD" id="cd18790">
    <property type="entry name" value="SF2_C_UvrB"/>
    <property type="match status" value="1"/>
</dbReference>
<dbReference type="FunFam" id="3.40.50.300:FF:000257">
    <property type="entry name" value="UvrABC system protein B"/>
    <property type="match status" value="1"/>
</dbReference>
<dbReference type="FunFam" id="3.40.50.300:FF:000401">
    <property type="entry name" value="UvrABC system protein B"/>
    <property type="match status" value="1"/>
</dbReference>
<dbReference type="FunFam" id="3.40.50.300:FF:000477">
    <property type="entry name" value="UvrABC system protein B"/>
    <property type="match status" value="1"/>
</dbReference>
<dbReference type="Gene3D" id="3.40.50.300">
    <property type="entry name" value="P-loop containing nucleotide triphosphate hydrolases"/>
    <property type="match status" value="3"/>
</dbReference>
<dbReference type="Gene3D" id="4.10.860.10">
    <property type="entry name" value="UVR domain"/>
    <property type="match status" value="1"/>
</dbReference>
<dbReference type="HAMAP" id="MF_00204">
    <property type="entry name" value="UvrB"/>
    <property type="match status" value="1"/>
</dbReference>
<dbReference type="InterPro" id="IPR006935">
    <property type="entry name" value="Helicase/UvrB_N"/>
</dbReference>
<dbReference type="InterPro" id="IPR014001">
    <property type="entry name" value="Helicase_ATP-bd"/>
</dbReference>
<dbReference type="InterPro" id="IPR001650">
    <property type="entry name" value="Helicase_C-like"/>
</dbReference>
<dbReference type="InterPro" id="IPR027417">
    <property type="entry name" value="P-loop_NTPase"/>
</dbReference>
<dbReference type="InterPro" id="IPR001943">
    <property type="entry name" value="UVR_dom"/>
</dbReference>
<dbReference type="InterPro" id="IPR036876">
    <property type="entry name" value="UVR_dom_sf"/>
</dbReference>
<dbReference type="InterPro" id="IPR004807">
    <property type="entry name" value="UvrB"/>
</dbReference>
<dbReference type="InterPro" id="IPR041471">
    <property type="entry name" value="UvrB_inter"/>
</dbReference>
<dbReference type="InterPro" id="IPR024759">
    <property type="entry name" value="UvrB_YAD/RRR_dom"/>
</dbReference>
<dbReference type="NCBIfam" id="NF003673">
    <property type="entry name" value="PRK05298.1"/>
    <property type="match status" value="1"/>
</dbReference>
<dbReference type="NCBIfam" id="TIGR00631">
    <property type="entry name" value="uvrb"/>
    <property type="match status" value="1"/>
</dbReference>
<dbReference type="PANTHER" id="PTHR24029">
    <property type="entry name" value="UVRABC SYSTEM PROTEIN B"/>
    <property type="match status" value="1"/>
</dbReference>
<dbReference type="PANTHER" id="PTHR24029:SF0">
    <property type="entry name" value="UVRABC SYSTEM PROTEIN B"/>
    <property type="match status" value="1"/>
</dbReference>
<dbReference type="Pfam" id="PF00271">
    <property type="entry name" value="Helicase_C"/>
    <property type="match status" value="1"/>
</dbReference>
<dbReference type="Pfam" id="PF04851">
    <property type="entry name" value="ResIII"/>
    <property type="match status" value="1"/>
</dbReference>
<dbReference type="Pfam" id="PF02151">
    <property type="entry name" value="UVR"/>
    <property type="match status" value="1"/>
</dbReference>
<dbReference type="Pfam" id="PF12344">
    <property type="entry name" value="UvrB"/>
    <property type="match status" value="1"/>
</dbReference>
<dbReference type="Pfam" id="PF17757">
    <property type="entry name" value="UvrB_inter"/>
    <property type="match status" value="1"/>
</dbReference>
<dbReference type="SMART" id="SM00487">
    <property type="entry name" value="DEXDc"/>
    <property type="match status" value="1"/>
</dbReference>
<dbReference type="SMART" id="SM00490">
    <property type="entry name" value="HELICc"/>
    <property type="match status" value="1"/>
</dbReference>
<dbReference type="SUPFAM" id="SSF46600">
    <property type="entry name" value="C-terminal UvrC-binding domain of UvrB"/>
    <property type="match status" value="1"/>
</dbReference>
<dbReference type="SUPFAM" id="SSF52540">
    <property type="entry name" value="P-loop containing nucleoside triphosphate hydrolases"/>
    <property type="match status" value="2"/>
</dbReference>
<dbReference type="PROSITE" id="PS51192">
    <property type="entry name" value="HELICASE_ATP_BIND_1"/>
    <property type="match status" value="1"/>
</dbReference>
<dbReference type="PROSITE" id="PS51194">
    <property type="entry name" value="HELICASE_CTER"/>
    <property type="match status" value="1"/>
</dbReference>
<dbReference type="PROSITE" id="PS50151">
    <property type="entry name" value="UVR"/>
    <property type="match status" value="1"/>
</dbReference>
<evidence type="ECO:0000255" key="1">
    <source>
        <dbReference type="HAMAP-Rule" id="MF_00204"/>
    </source>
</evidence>